<feature type="chain" id="PRO_0000220322" description="Glutathione-dependent formaldehyde-activating enzyme">
    <location>
        <begin position="1"/>
        <end position="189"/>
    </location>
</feature>
<feature type="domain" description="CENP-V/GFA" evidence="2">
    <location>
        <begin position="20"/>
        <end position="166"/>
    </location>
</feature>
<feature type="binding site" evidence="1 2">
    <location>
        <position position="27"/>
    </location>
    <ligand>
        <name>Zn(2+)</name>
        <dbReference type="ChEBI" id="CHEBI:29105"/>
        <label>1</label>
        <note>structural</note>
    </ligand>
</feature>
<feature type="binding site" evidence="1 2">
    <location>
        <position position="29"/>
    </location>
    <ligand>
        <name>Zn(2+)</name>
        <dbReference type="ChEBI" id="CHEBI:29105"/>
        <label>1</label>
        <note>structural</note>
    </ligand>
</feature>
<feature type="binding site" evidence="1 2">
    <location>
        <position position="48"/>
    </location>
    <ligand>
        <name>Zn(2+)</name>
        <dbReference type="ChEBI" id="CHEBI:29105"/>
        <label>2</label>
        <note>catalytic</note>
    </ligand>
</feature>
<feature type="binding site" evidence="1 2">
    <location>
        <position position="50"/>
    </location>
    <ligand>
        <name>Zn(2+)</name>
        <dbReference type="ChEBI" id="CHEBI:29105"/>
        <label>2</label>
        <note>catalytic</note>
    </ligand>
</feature>
<feature type="binding site" evidence="1 2">
    <location>
        <position position="53"/>
    </location>
    <ligand>
        <name>Zn(2+)</name>
        <dbReference type="ChEBI" id="CHEBI:29105"/>
        <label>2</label>
        <note>catalytic</note>
    </ligand>
</feature>
<feature type="binding site" evidence="1 2">
    <location>
        <position position="95"/>
    </location>
    <ligand>
        <name>Zn(2+)</name>
        <dbReference type="ChEBI" id="CHEBI:29105"/>
        <label>1</label>
        <note>structural</note>
    </ligand>
</feature>
<feature type="binding site" evidence="1 2">
    <location>
        <position position="98"/>
    </location>
    <ligand>
        <name>Zn(2+)</name>
        <dbReference type="ChEBI" id="CHEBI:29105"/>
        <label>1</label>
        <note>structural</note>
    </ligand>
</feature>
<sequence>MAEKLHPRIDNGLPKESASFAGGTLVCACTSKPVKVKVKGQIAHNHACGCTKCWKPEGAIFSVVAVAGTGDVTVTENGDKLKVVDASALIQRHACTGCGVHMHGPVERDHAFKGLTFIHPERFVEDGWSPPGFTAFVSSIIESGVDPKRMDGIRAQLRTIGLEPYDCLNPGLMDYIATWTAKKSGALPA</sequence>
<proteinExistence type="inferred from homology"/>
<accession>Q98LU4</accession>
<comment type="function">
    <text evidence="1">Catalyzes the condensation of formaldehyde and glutathione to S-hydroxymethylglutathione.</text>
</comment>
<comment type="catalytic activity">
    <reaction evidence="1">
        <text>S-(hydroxymethyl)glutathione = glutathione + formaldehyde</text>
        <dbReference type="Rhea" id="RHEA:22488"/>
        <dbReference type="ChEBI" id="CHEBI:16842"/>
        <dbReference type="ChEBI" id="CHEBI:57925"/>
        <dbReference type="ChEBI" id="CHEBI:58758"/>
        <dbReference type="EC" id="4.4.1.22"/>
    </reaction>
</comment>
<comment type="cofactor">
    <cofactor evidence="1 2">
        <name>Zn(2+)</name>
        <dbReference type="ChEBI" id="CHEBI:29105"/>
    </cofactor>
    <text evidence="1 2">Binds 2 Zn(2+) ions per subunit.</text>
</comment>
<comment type="pathway">
    <text evidence="1">One-carbon metabolism; formaldehyde degradation; formate from formaldehyde (glutathione route): step 1/3.</text>
</comment>
<comment type="similarity">
    <text evidence="1">Belongs to the Gfa family.</text>
</comment>
<comment type="sequence caution" evidence="3">
    <conflict type="erroneous initiation">
        <sequence resource="EMBL-CDS" id="BAB48369"/>
    </conflict>
</comment>
<organism>
    <name type="scientific">Mesorhizobium japonicum (strain LMG 29417 / CECT 9101 / MAFF 303099)</name>
    <name type="common">Mesorhizobium loti (strain MAFF 303099)</name>
    <dbReference type="NCBI Taxonomy" id="266835"/>
    <lineage>
        <taxon>Bacteria</taxon>
        <taxon>Pseudomonadati</taxon>
        <taxon>Pseudomonadota</taxon>
        <taxon>Alphaproteobacteria</taxon>
        <taxon>Hyphomicrobiales</taxon>
        <taxon>Phyllobacteriaceae</taxon>
        <taxon>Mesorhizobium</taxon>
    </lineage>
</organism>
<gene>
    <name evidence="1" type="primary">gfa</name>
    <name type="ordered locus">mlr0874</name>
</gene>
<evidence type="ECO:0000255" key="1">
    <source>
        <dbReference type="HAMAP-Rule" id="MF_00723"/>
    </source>
</evidence>
<evidence type="ECO:0000255" key="2">
    <source>
        <dbReference type="PROSITE-ProRule" id="PRU01239"/>
    </source>
</evidence>
<evidence type="ECO:0000305" key="3"/>
<protein>
    <recommendedName>
        <fullName evidence="1">Glutathione-dependent formaldehyde-activating enzyme</fullName>
        <ecNumber evidence="1">4.4.1.22</ecNumber>
    </recommendedName>
    <alternativeName>
        <fullName evidence="1">S-(hydroxymethyl)glutathione synthase</fullName>
    </alternativeName>
</protein>
<name>GFA_RHILO</name>
<reference key="1">
    <citation type="journal article" date="2000" name="DNA Res.">
        <title>Complete genome structure of the nitrogen-fixing symbiotic bacterium Mesorhizobium loti.</title>
        <authorList>
            <person name="Kaneko T."/>
            <person name="Nakamura Y."/>
            <person name="Sato S."/>
            <person name="Asamizu E."/>
            <person name="Kato T."/>
            <person name="Sasamoto S."/>
            <person name="Watanabe A."/>
            <person name="Idesawa K."/>
            <person name="Ishikawa A."/>
            <person name="Kawashima K."/>
            <person name="Kimura T."/>
            <person name="Kishida Y."/>
            <person name="Kiyokawa C."/>
            <person name="Kohara M."/>
            <person name="Matsumoto M."/>
            <person name="Matsuno A."/>
            <person name="Mochizuki Y."/>
            <person name="Nakayama S."/>
            <person name="Nakazaki N."/>
            <person name="Shimpo S."/>
            <person name="Sugimoto M."/>
            <person name="Takeuchi C."/>
            <person name="Yamada M."/>
            <person name="Tabata S."/>
        </authorList>
    </citation>
    <scope>NUCLEOTIDE SEQUENCE [LARGE SCALE GENOMIC DNA]</scope>
    <source>
        <strain>LMG 29417 / CECT 9101 / MAFF 303099</strain>
    </source>
</reference>
<keyword id="KW-0456">Lyase</keyword>
<keyword id="KW-0479">Metal-binding</keyword>
<keyword id="KW-0862">Zinc</keyword>
<dbReference type="EC" id="4.4.1.22" evidence="1"/>
<dbReference type="EMBL" id="BA000012">
    <property type="protein sequence ID" value="BAB48369.1"/>
    <property type="status" value="ALT_INIT"/>
    <property type="molecule type" value="Genomic_DNA"/>
</dbReference>
<dbReference type="RefSeq" id="WP_032930445.1">
    <property type="nucleotide sequence ID" value="NC_002678.2"/>
</dbReference>
<dbReference type="SMR" id="Q98LU4"/>
<dbReference type="GeneID" id="66683808"/>
<dbReference type="KEGG" id="mlo:mlr0874"/>
<dbReference type="eggNOG" id="COG3791">
    <property type="taxonomic scope" value="Bacteria"/>
</dbReference>
<dbReference type="HOGENOM" id="CLU_090716_0_0_5"/>
<dbReference type="UniPathway" id="UPA00562">
    <property type="reaction ID" value="UER00621"/>
</dbReference>
<dbReference type="Proteomes" id="UP000000552">
    <property type="component" value="Chromosome"/>
</dbReference>
<dbReference type="GO" id="GO:0051907">
    <property type="term" value="F:S-(hydroxymethyl)glutathione synthase activity"/>
    <property type="evidence" value="ECO:0007669"/>
    <property type="project" value="UniProtKB-UniRule"/>
</dbReference>
<dbReference type="GO" id="GO:0008270">
    <property type="term" value="F:zinc ion binding"/>
    <property type="evidence" value="ECO:0007669"/>
    <property type="project" value="UniProtKB-UniRule"/>
</dbReference>
<dbReference type="GO" id="GO:0046294">
    <property type="term" value="P:formaldehyde catabolic process"/>
    <property type="evidence" value="ECO:0007669"/>
    <property type="project" value="UniProtKB-UniRule"/>
</dbReference>
<dbReference type="Gene3D" id="3.90.1590.10">
    <property type="entry name" value="glutathione-dependent formaldehyde- activating enzyme (gfa)"/>
    <property type="match status" value="1"/>
</dbReference>
<dbReference type="HAMAP" id="MF_00723">
    <property type="entry name" value="Formald_GSH"/>
    <property type="match status" value="1"/>
</dbReference>
<dbReference type="InterPro" id="IPR006913">
    <property type="entry name" value="CENP-V/GFA"/>
</dbReference>
<dbReference type="InterPro" id="IPR014185">
    <property type="entry name" value="Formald_GSH"/>
</dbReference>
<dbReference type="InterPro" id="IPR011057">
    <property type="entry name" value="Mss4-like_sf"/>
</dbReference>
<dbReference type="NCBIfam" id="TIGR02820">
    <property type="entry name" value="formald_GSH"/>
    <property type="match status" value="1"/>
</dbReference>
<dbReference type="NCBIfam" id="NF003829">
    <property type="entry name" value="PRK05417.1"/>
    <property type="match status" value="1"/>
</dbReference>
<dbReference type="PANTHER" id="PTHR33337:SF40">
    <property type="entry name" value="CENP-V_GFA DOMAIN-CONTAINING PROTEIN-RELATED"/>
    <property type="match status" value="1"/>
</dbReference>
<dbReference type="PANTHER" id="PTHR33337">
    <property type="entry name" value="GFA DOMAIN-CONTAINING PROTEIN"/>
    <property type="match status" value="1"/>
</dbReference>
<dbReference type="Pfam" id="PF04828">
    <property type="entry name" value="GFA"/>
    <property type="match status" value="1"/>
</dbReference>
<dbReference type="PIRSF" id="PIRSF033318">
    <property type="entry name" value="Formald_GSH"/>
    <property type="match status" value="1"/>
</dbReference>
<dbReference type="SUPFAM" id="SSF51316">
    <property type="entry name" value="Mss4-like"/>
    <property type="match status" value="1"/>
</dbReference>
<dbReference type="PROSITE" id="PS51891">
    <property type="entry name" value="CENP_V_GFA"/>
    <property type="match status" value="1"/>
</dbReference>